<feature type="chain" id="PRO_1000089896" description="Phosphate acyltransferase">
    <location>
        <begin position="1"/>
        <end position="343"/>
    </location>
</feature>
<reference key="1">
    <citation type="journal article" date="2009" name="Infect. Immun.">
        <title>Comparative genomics reveal extensive transposon-mediated genomic plasticity and diversity among potential effector proteins within the genus Coxiella.</title>
        <authorList>
            <person name="Beare P.A."/>
            <person name="Unsworth N."/>
            <person name="Andoh M."/>
            <person name="Voth D.E."/>
            <person name="Omsland A."/>
            <person name="Gilk S.D."/>
            <person name="Williams K.P."/>
            <person name="Sobral B.W."/>
            <person name="Kupko J.J. III"/>
            <person name="Porcella S.F."/>
            <person name="Samuel J.E."/>
            <person name="Heinzen R.A."/>
        </authorList>
    </citation>
    <scope>NUCLEOTIDE SEQUENCE [LARGE SCALE GENOMIC DNA]</scope>
    <source>
        <strain>CbuG_Q212</strain>
    </source>
</reference>
<evidence type="ECO:0000255" key="1">
    <source>
        <dbReference type="HAMAP-Rule" id="MF_00019"/>
    </source>
</evidence>
<keyword id="KW-0963">Cytoplasm</keyword>
<keyword id="KW-0444">Lipid biosynthesis</keyword>
<keyword id="KW-0443">Lipid metabolism</keyword>
<keyword id="KW-0594">Phospholipid biosynthesis</keyword>
<keyword id="KW-1208">Phospholipid metabolism</keyword>
<keyword id="KW-0808">Transferase</keyword>
<accession>B6J1I7</accession>
<sequence length="343" mass="37462">MLKTIALDAMGGDHGPKVIVPAALSILKKHPKVKLTLVGKEDQLALLIPEKNRKSFGQRLEIIHASEEVGMDEPPSQALRTKKNSSMRVAINLVKEGQAHACVSAGNTGALMATARYVLKTLPGIDRPAIIAAFPTKNEREVRVLDLGANVDSTPENLYQFAVMGSILSSAAHNIRNPRIGLLNVGEEEIKGNELVKKANELFETRKTINYIGYVEGNTIFNNIADVVVCDGFVGNAVLKASEGVAQLIKQHAKEAFSEAWWTKLALLPAIPILKRLIRRVDPERYNGATFLGLNGIVVKSHGSANIKAFVCAVEEAIFQVDKNIPQLIKEEVAHILKEFENK</sequence>
<protein>
    <recommendedName>
        <fullName evidence="1">Phosphate acyltransferase</fullName>
        <ecNumber evidence="1">2.3.1.274</ecNumber>
    </recommendedName>
    <alternativeName>
        <fullName evidence="1">Acyl-ACP phosphotransacylase</fullName>
    </alternativeName>
    <alternativeName>
        <fullName evidence="1">Acyl-[acyl-carrier-protein]--phosphate acyltransferase</fullName>
    </alternativeName>
    <alternativeName>
        <fullName evidence="1">Phosphate-acyl-ACP acyltransferase</fullName>
    </alternativeName>
</protein>
<gene>
    <name evidence="1" type="primary">plsX</name>
    <name type="ordered locus">CbuG_1521</name>
</gene>
<dbReference type="EC" id="2.3.1.274" evidence="1"/>
<dbReference type="EMBL" id="CP001019">
    <property type="protein sequence ID" value="ACJ18815.1"/>
    <property type="molecule type" value="Genomic_DNA"/>
</dbReference>
<dbReference type="RefSeq" id="WP_012570298.1">
    <property type="nucleotide sequence ID" value="NC_011527.1"/>
</dbReference>
<dbReference type="SMR" id="B6J1I7"/>
<dbReference type="KEGG" id="cbg:CbuG_1521"/>
<dbReference type="HOGENOM" id="CLU_039379_1_0_6"/>
<dbReference type="UniPathway" id="UPA00085"/>
<dbReference type="GO" id="GO:0005737">
    <property type="term" value="C:cytoplasm"/>
    <property type="evidence" value="ECO:0007669"/>
    <property type="project" value="UniProtKB-SubCell"/>
</dbReference>
<dbReference type="GO" id="GO:0043811">
    <property type="term" value="F:phosphate:acyl-[acyl carrier protein] acyltransferase activity"/>
    <property type="evidence" value="ECO:0007669"/>
    <property type="project" value="UniProtKB-UniRule"/>
</dbReference>
<dbReference type="GO" id="GO:0006633">
    <property type="term" value="P:fatty acid biosynthetic process"/>
    <property type="evidence" value="ECO:0007669"/>
    <property type="project" value="UniProtKB-UniRule"/>
</dbReference>
<dbReference type="GO" id="GO:0008654">
    <property type="term" value="P:phospholipid biosynthetic process"/>
    <property type="evidence" value="ECO:0007669"/>
    <property type="project" value="UniProtKB-KW"/>
</dbReference>
<dbReference type="Gene3D" id="3.40.718.10">
    <property type="entry name" value="Isopropylmalate Dehydrogenase"/>
    <property type="match status" value="1"/>
</dbReference>
<dbReference type="HAMAP" id="MF_00019">
    <property type="entry name" value="PlsX"/>
    <property type="match status" value="1"/>
</dbReference>
<dbReference type="InterPro" id="IPR003664">
    <property type="entry name" value="FA_synthesis"/>
</dbReference>
<dbReference type="InterPro" id="IPR012281">
    <property type="entry name" value="Phospholipid_synth_PlsX-like"/>
</dbReference>
<dbReference type="NCBIfam" id="TIGR00182">
    <property type="entry name" value="plsX"/>
    <property type="match status" value="1"/>
</dbReference>
<dbReference type="PANTHER" id="PTHR30100">
    <property type="entry name" value="FATTY ACID/PHOSPHOLIPID SYNTHESIS PROTEIN PLSX"/>
    <property type="match status" value="1"/>
</dbReference>
<dbReference type="PANTHER" id="PTHR30100:SF1">
    <property type="entry name" value="PHOSPHATE ACYLTRANSFERASE"/>
    <property type="match status" value="1"/>
</dbReference>
<dbReference type="Pfam" id="PF02504">
    <property type="entry name" value="FA_synthesis"/>
    <property type="match status" value="1"/>
</dbReference>
<dbReference type="PIRSF" id="PIRSF002465">
    <property type="entry name" value="Phsphlp_syn_PlsX"/>
    <property type="match status" value="1"/>
</dbReference>
<dbReference type="SUPFAM" id="SSF53659">
    <property type="entry name" value="Isocitrate/Isopropylmalate dehydrogenase-like"/>
    <property type="match status" value="1"/>
</dbReference>
<organism>
    <name type="scientific">Coxiella burnetii (strain CbuG_Q212)</name>
    <name type="common">Coxiella burnetii (strain Q212)</name>
    <dbReference type="NCBI Taxonomy" id="434923"/>
    <lineage>
        <taxon>Bacteria</taxon>
        <taxon>Pseudomonadati</taxon>
        <taxon>Pseudomonadota</taxon>
        <taxon>Gammaproteobacteria</taxon>
        <taxon>Legionellales</taxon>
        <taxon>Coxiellaceae</taxon>
        <taxon>Coxiella</taxon>
    </lineage>
</organism>
<name>PLSX_COXB2</name>
<proteinExistence type="inferred from homology"/>
<comment type="function">
    <text evidence="1">Catalyzes the reversible formation of acyl-phosphate (acyl-PO(4)) from acyl-[acyl-carrier-protein] (acyl-ACP). This enzyme utilizes acyl-ACP as fatty acyl donor, but not acyl-CoA.</text>
</comment>
<comment type="catalytic activity">
    <reaction evidence="1">
        <text>a fatty acyl-[ACP] + phosphate = an acyl phosphate + holo-[ACP]</text>
        <dbReference type="Rhea" id="RHEA:42292"/>
        <dbReference type="Rhea" id="RHEA-COMP:9685"/>
        <dbReference type="Rhea" id="RHEA-COMP:14125"/>
        <dbReference type="ChEBI" id="CHEBI:43474"/>
        <dbReference type="ChEBI" id="CHEBI:59918"/>
        <dbReference type="ChEBI" id="CHEBI:64479"/>
        <dbReference type="ChEBI" id="CHEBI:138651"/>
        <dbReference type="EC" id="2.3.1.274"/>
    </reaction>
</comment>
<comment type="pathway">
    <text evidence="1">Lipid metabolism; phospholipid metabolism.</text>
</comment>
<comment type="subunit">
    <text evidence="1">Homodimer. Probably interacts with PlsY.</text>
</comment>
<comment type="subcellular location">
    <subcellularLocation>
        <location evidence="1">Cytoplasm</location>
    </subcellularLocation>
    <text evidence="1">Associated with the membrane possibly through PlsY.</text>
</comment>
<comment type="similarity">
    <text evidence="1">Belongs to the PlsX family.</text>
</comment>